<organism>
    <name type="scientific">Nitrosomonas europaea (strain ATCC 19718 / CIP 103999 / KCTC 2705 / NBRC 14298)</name>
    <dbReference type="NCBI Taxonomy" id="228410"/>
    <lineage>
        <taxon>Bacteria</taxon>
        <taxon>Pseudomonadati</taxon>
        <taxon>Pseudomonadota</taxon>
        <taxon>Betaproteobacteria</taxon>
        <taxon>Nitrosomonadales</taxon>
        <taxon>Nitrosomonadaceae</taxon>
        <taxon>Nitrosomonas</taxon>
    </lineage>
</organism>
<dbReference type="EC" id="2.5.1.16" evidence="1"/>
<dbReference type="EMBL" id="AL954747">
    <property type="protein sequence ID" value="CAD84258.1"/>
    <property type="molecule type" value="Genomic_DNA"/>
</dbReference>
<dbReference type="RefSeq" id="WP_011110982.1">
    <property type="nucleotide sequence ID" value="NC_004757.1"/>
</dbReference>
<dbReference type="SMR" id="Q82XD4"/>
<dbReference type="STRING" id="228410.NE0347"/>
<dbReference type="GeneID" id="87103552"/>
<dbReference type="KEGG" id="neu:NE0347"/>
<dbReference type="eggNOG" id="COG0421">
    <property type="taxonomic scope" value="Bacteria"/>
</dbReference>
<dbReference type="HOGENOM" id="CLU_048199_0_1_4"/>
<dbReference type="OrthoDB" id="9793120at2"/>
<dbReference type="PhylomeDB" id="Q82XD4"/>
<dbReference type="UniPathway" id="UPA00248">
    <property type="reaction ID" value="UER00314"/>
</dbReference>
<dbReference type="Proteomes" id="UP000001416">
    <property type="component" value="Chromosome"/>
</dbReference>
<dbReference type="GO" id="GO:0005737">
    <property type="term" value="C:cytoplasm"/>
    <property type="evidence" value="ECO:0007669"/>
    <property type="project" value="UniProtKB-SubCell"/>
</dbReference>
<dbReference type="GO" id="GO:0004766">
    <property type="term" value="F:spermidine synthase activity"/>
    <property type="evidence" value="ECO:0007669"/>
    <property type="project" value="UniProtKB-UniRule"/>
</dbReference>
<dbReference type="GO" id="GO:0008295">
    <property type="term" value="P:spermidine biosynthetic process"/>
    <property type="evidence" value="ECO:0007669"/>
    <property type="project" value="UniProtKB-UniRule"/>
</dbReference>
<dbReference type="CDD" id="cd02440">
    <property type="entry name" value="AdoMet_MTases"/>
    <property type="match status" value="1"/>
</dbReference>
<dbReference type="Gene3D" id="2.30.140.10">
    <property type="entry name" value="Spermidine synthase, tetramerisation domain"/>
    <property type="match status" value="1"/>
</dbReference>
<dbReference type="Gene3D" id="3.40.50.150">
    <property type="entry name" value="Vaccinia Virus protein VP39"/>
    <property type="match status" value="1"/>
</dbReference>
<dbReference type="HAMAP" id="MF_00198">
    <property type="entry name" value="Spermidine_synth"/>
    <property type="match status" value="1"/>
</dbReference>
<dbReference type="InterPro" id="IPR030374">
    <property type="entry name" value="PABS"/>
</dbReference>
<dbReference type="InterPro" id="IPR029063">
    <property type="entry name" value="SAM-dependent_MTases_sf"/>
</dbReference>
<dbReference type="InterPro" id="IPR001045">
    <property type="entry name" value="Spermi_synthase"/>
</dbReference>
<dbReference type="InterPro" id="IPR035246">
    <property type="entry name" value="Spermidine_synt_N"/>
</dbReference>
<dbReference type="InterPro" id="IPR037163">
    <property type="entry name" value="Spermidine_synt_N_sf"/>
</dbReference>
<dbReference type="NCBIfam" id="NF002010">
    <property type="entry name" value="PRK00811.1"/>
    <property type="match status" value="1"/>
</dbReference>
<dbReference type="PANTHER" id="PTHR11558:SF11">
    <property type="entry name" value="SPERMIDINE SYNTHASE"/>
    <property type="match status" value="1"/>
</dbReference>
<dbReference type="PANTHER" id="PTHR11558">
    <property type="entry name" value="SPERMIDINE/SPERMINE SYNTHASE"/>
    <property type="match status" value="1"/>
</dbReference>
<dbReference type="Pfam" id="PF17284">
    <property type="entry name" value="Spermine_synt_N"/>
    <property type="match status" value="1"/>
</dbReference>
<dbReference type="Pfam" id="PF01564">
    <property type="entry name" value="Spermine_synth"/>
    <property type="match status" value="1"/>
</dbReference>
<dbReference type="SUPFAM" id="SSF53335">
    <property type="entry name" value="S-adenosyl-L-methionine-dependent methyltransferases"/>
    <property type="match status" value="1"/>
</dbReference>
<dbReference type="PROSITE" id="PS51006">
    <property type="entry name" value="PABS_2"/>
    <property type="match status" value="1"/>
</dbReference>
<feature type="chain" id="PRO_0000156491" description="Polyamine aminopropyltransferase">
    <location>
        <begin position="1"/>
        <end position="325"/>
    </location>
</feature>
<feature type="domain" description="PABS" evidence="1">
    <location>
        <begin position="11"/>
        <end position="248"/>
    </location>
</feature>
<feature type="active site" description="Proton acceptor" evidence="1">
    <location>
        <position position="169"/>
    </location>
</feature>
<feature type="binding site" evidence="1">
    <location>
        <position position="44"/>
    </location>
    <ligand>
        <name>S-methyl-5'-thioadenosine</name>
        <dbReference type="ChEBI" id="CHEBI:17509"/>
    </ligand>
</feature>
<feature type="binding site" evidence="1">
    <location>
        <position position="75"/>
    </location>
    <ligand>
        <name>spermidine</name>
        <dbReference type="ChEBI" id="CHEBI:57834"/>
    </ligand>
</feature>
<feature type="binding site" evidence="1">
    <location>
        <position position="99"/>
    </location>
    <ligand>
        <name>spermidine</name>
        <dbReference type="ChEBI" id="CHEBI:57834"/>
    </ligand>
</feature>
<feature type="binding site" evidence="1">
    <location>
        <position position="119"/>
    </location>
    <ligand>
        <name>S-methyl-5'-thioadenosine</name>
        <dbReference type="ChEBI" id="CHEBI:17509"/>
    </ligand>
</feature>
<feature type="binding site" evidence="1">
    <location>
        <begin position="151"/>
        <end position="152"/>
    </location>
    <ligand>
        <name>S-methyl-5'-thioadenosine</name>
        <dbReference type="ChEBI" id="CHEBI:17509"/>
    </ligand>
</feature>
<feature type="binding site" evidence="1">
    <location>
        <position position="176"/>
    </location>
    <ligand>
        <name>S-methyl-5'-thioadenosine</name>
        <dbReference type="ChEBI" id="CHEBI:17509"/>
    </ligand>
</feature>
<name>SPEE_NITEU</name>
<keyword id="KW-0963">Cytoplasm</keyword>
<keyword id="KW-0620">Polyamine biosynthesis</keyword>
<keyword id="KW-1185">Reference proteome</keyword>
<keyword id="KW-0745">Spermidine biosynthesis</keyword>
<keyword id="KW-0808">Transferase</keyword>
<accession>Q82XD4</accession>
<gene>
    <name evidence="1" type="primary">speE</name>
    <name type="ordered locus">NE0347</name>
</gene>
<protein>
    <recommendedName>
        <fullName evidence="1">Polyamine aminopropyltransferase</fullName>
    </recommendedName>
    <alternativeName>
        <fullName evidence="1">Putrescine aminopropyltransferase</fullName>
        <shortName evidence="1">PAPT</shortName>
    </alternativeName>
    <alternativeName>
        <fullName evidence="1">Spermidine synthase</fullName>
        <shortName evidence="1">SPDS</shortName>
        <shortName evidence="1">SPDSY</shortName>
        <ecNumber evidence="1">2.5.1.16</ecNumber>
    </alternativeName>
</protein>
<sequence length="325" mass="36238">MSTSERPPSPSSMAEDFAVEPLSPDFGFYLRTTELLAERHSPVQHIEIVQTPLFGRAMRIDGCFMTSEQDEFFYHEPMVHLPAITHGDPRQALVVGGGDGGTAYNLLRYPNMERVVLAELDRDVIDMARTWLPKVHRGAFEDPRLELHLGDGRAFTGNCKNQFDQIVLDLTDPFGPAISLYTRDFYRACRRALKPGGVLSLHIQSPIYRSPIMARLLASLRDVFGVVRPYLQYVPLYGTLWAMAMASDSADPLSLSATEIDARLTQNGLIDLKLYSGGTHHALLNLPPFVQTLLSEPAYPIDDGNSLDDINLDPREAGKLKLIQT</sequence>
<comment type="function">
    <text evidence="1">Catalyzes the irreversible transfer of a propylamine group from the amino donor S-adenosylmethioninamine (decarboxy-AdoMet) to putrescine (1,4-diaminobutane) to yield spermidine.</text>
</comment>
<comment type="catalytic activity">
    <reaction evidence="1">
        <text>S-adenosyl 3-(methylsulfanyl)propylamine + putrescine = S-methyl-5'-thioadenosine + spermidine + H(+)</text>
        <dbReference type="Rhea" id="RHEA:12721"/>
        <dbReference type="ChEBI" id="CHEBI:15378"/>
        <dbReference type="ChEBI" id="CHEBI:17509"/>
        <dbReference type="ChEBI" id="CHEBI:57443"/>
        <dbReference type="ChEBI" id="CHEBI:57834"/>
        <dbReference type="ChEBI" id="CHEBI:326268"/>
        <dbReference type="EC" id="2.5.1.16"/>
    </reaction>
</comment>
<comment type="pathway">
    <text evidence="1">Amine and polyamine biosynthesis; spermidine biosynthesis; spermidine from putrescine: step 1/1.</text>
</comment>
<comment type="subunit">
    <text evidence="1">Homodimer or homotetramer.</text>
</comment>
<comment type="subcellular location">
    <subcellularLocation>
        <location evidence="1">Cytoplasm</location>
    </subcellularLocation>
</comment>
<comment type="similarity">
    <text evidence="1">Belongs to the spermidine/spermine synthase family.</text>
</comment>
<evidence type="ECO:0000255" key="1">
    <source>
        <dbReference type="HAMAP-Rule" id="MF_00198"/>
    </source>
</evidence>
<reference key="1">
    <citation type="journal article" date="2003" name="J. Bacteriol.">
        <title>Complete genome sequence of the ammonia-oxidizing bacterium and obligate chemolithoautotroph Nitrosomonas europaea.</title>
        <authorList>
            <person name="Chain P."/>
            <person name="Lamerdin J.E."/>
            <person name="Larimer F.W."/>
            <person name="Regala W."/>
            <person name="Lao V."/>
            <person name="Land M.L."/>
            <person name="Hauser L."/>
            <person name="Hooper A.B."/>
            <person name="Klotz M.G."/>
            <person name="Norton J."/>
            <person name="Sayavedra-Soto L.A."/>
            <person name="Arciero D.M."/>
            <person name="Hommes N.G."/>
            <person name="Whittaker M.M."/>
            <person name="Arp D.J."/>
        </authorList>
    </citation>
    <scope>NUCLEOTIDE SEQUENCE [LARGE SCALE GENOMIC DNA]</scope>
    <source>
        <strain>ATCC 19718 / CIP 103999 / KCTC 2705 / NBRC 14298</strain>
    </source>
</reference>
<proteinExistence type="inferred from homology"/>